<protein>
    <recommendedName>
        <fullName evidence="1">Large ribosomal subunit protein uL24</fullName>
    </recommendedName>
    <alternativeName>
        <fullName evidence="2">50S ribosomal protein L24</fullName>
    </alternativeName>
</protein>
<keyword id="KW-0687">Ribonucleoprotein</keyword>
<keyword id="KW-0689">Ribosomal protein</keyword>
<keyword id="KW-0694">RNA-binding</keyword>
<keyword id="KW-0699">rRNA-binding</keyword>
<gene>
    <name evidence="1" type="primary">rplX</name>
    <name type="ordered locus">SAUSA300_2193</name>
</gene>
<feature type="chain" id="PRO_0000241666" description="Large ribosomal subunit protein uL24">
    <location>
        <begin position="1"/>
        <end position="105"/>
    </location>
</feature>
<proteinExistence type="inferred from homology"/>
<name>RL24_STAA3</name>
<evidence type="ECO:0000255" key="1">
    <source>
        <dbReference type="HAMAP-Rule" id="MF_01326"/>
    </source>
</evidence>
<evidence type="ECO:0000305" key="2"/>
<dbReference type="EMBL" id="CP000255">
    <property type="protein sequence ID" value="ABD21883.1"/>
    <property type="molecule type" value="Genomic_DNA"/>
</dbReference>
<dbReference type="RefSeq" id="WP_000547687.1">
    <property type="nucleotide sequence ID" value="NZ_CP027476.1"/>
</dbReference>
<dbReference type="SMR" id="Q2FEQ0"/>
<dbReference type="KEGG" id="saa:SAUSA300_2193"/>
<dbReference type="HOGENOM" id="CLU_093315_2_0_9"/>
<dbReference type="OMA" id="HISNLML"/>
<dbReference type="Proteomes" id="UP000001939">
    <property type="component" value="Chromosome"/>
</dbReference>
<dbReference type="GO" id="GO:1990904">
    <property type="term" value="C:ribonucleoprotein complex"/>
    <property type="evidence" value="ECO:0007669"/>
    <property type="project" value="UniProtKB-KW"/>
</dbReference>
<dbReference type="GO" id="GO:0005840">
    <property type="term" value="C:ribosome"/>
    <property type="evidence" value="ECO:0007669"/>
    <property type="project" value="UniProtKB-KW"/>
</dbReference>
<dbReference type="GO" id="GO:0019843">
    <property type="term" value="F:rRNA binding"/>
    <property type="evidence" value="ECO:0007669"/>
    <property type="project" value="UniProtKB-UniRule"/>
</dbReference>
<dbReference type="GO" id="GO:0003735">
    <property type="term" value="F:structural constituent of ribosome"/>
    <property type="evidence" value="ECO:0007669"/>
    <property type="project" value="InterPro"/>
</dbReference>
<dbReference type="GO" id="GO:0006412">
    <property type="term" value="P:translation"/>
    <property type="evidence" value="ECO:0007669"/>
    <property type="project" value="UniProtKB-UniRule"/>
</dbReference>
<dbReference type="CDD" id="cd06089">
    <property type="entry name" value="KOW_RPL26"/>
    <property type="match status" value="1"/>
</dbReference>
<dbReference type="FunFam" id="2.30.30.30:FF:000004">
    <property type="entry name" value="50S ribosomal protein L24"/>
    <property type="match status" value="1"/>
</dbReference>
<dbReference type="Gene3D" id="2.30.30.30">
    <property type="match status" value="1"/>
</dbReference>
<dbReference type="HAMAP" id="MF_01326_B">
    <property type="entry name" value="Ribosomal_uL24_B"/>
    <property type="match status" value="1"/>
</dbReference>
<dbReference type="InterPro" id="IPR005824">
    <property type="entry name" value="KOW"/>
</dbReference>
<dbReference type="InterPro" id="IPR014722">
    <property type="entry name" value="Rib_uL2_dom2"/>
</dbReference>
<dbReference type="InterPro" id="IPR003256">
    <property type="entry name" value="Ribosomal_uL24"/>
</dbReference>
<dbReference type="InterPro" id="IPR005825">
    <property type="entry name" value="Ribosomal_uL24_CS"/>
</dbReference>
<dbReference type="InterPro" id="IPR041988">
    <property type="entry name" value="Ribosomal_uL24_KOW"/>
</dbReference>
<dbReference type="InterPro" id="IPR008991">
    <property type="entry name" value="Translation_prot_SH3-like_sf"/>
</dbReference>
<dbReference type="NCBIfam" id="TIGR01079">
    <property type="entry name" value="rplX_bact"/>
    <property type="match status" value="1"/>
</dbReference>
<dbReference type="PANTHER" id="PTHR12903">
    <property type="entry name" value="MITOCHONDRIAL RIBOSOMAL PROTEIN L24"/>
    <property type="match status" value="1"/>
</dbReference>
<dbReference type="Pfam" id="PF00467">
    <property type="entry name" value="KOW"/>
    <property type="match status" value="1"/>
</dbReference>
<dbReference type="Pfam" id="PF17136">
    <property type="entry name" value="ribosomal_L24"/>
    <property type="match status" value="1"/>
</dbReference>
<dbReference type="SMART" id="SM00739">
    <property type="entry name" value="KOW"/>
    <property type="match status" value="1"/>
</dbReference>
<dbReference type="SUPFAM" id="SSF50104">
    <property type="entry name" value="Translation proteins SH3-like domain"/>
    <property type="match status" value="1"/>
</dbReference>
<dbReference type="PROSITE" id="PS01108">
    <property type="entry name" value="RIBOSOMAL_L24"/>
    <property type="match status" value="1"/>
</dbReference>
<sequence length="105" mass="11536">MHIKKGDNVKVIAGKDKGKEGKVIATLPKKDRVVVEGVNIMKKHQKPTQLNPEGGILETEAAIHVSNVQLLDPKTNEPTRVGYKFVDGKKVRIAKKSGEEIKSNN</sequence>
<organism>
    <name type="scientific">Staphylococcus aureus (strain USA300)</name>
    <dbReference type="NCBI Taxonomy" id="367830"/>
    <lineage>
        <taxon>Bacteria</taxon>
        <taxon>Bacillati</taxon>
        <taxon>Bacillota</taxon>
        <taxon>Bacilli</taxon>
        <taxon>Bacillales</taxon>
        <taxon>Staphylococcaceae</taxon>
        <taxon>Staphylococcus</taxon>
    </lineage>
</organism>
<accession>Q2FEQ0</accession>
<reference key="1">
    <citation type="journal article" date="2006" name="Lancet">
        <title>Complete genome sequence of USA300, an epidemic clone of community-acquired meticillin-resistant Staphylococcus aureus.</title>
        <authorList>
            <person name="Diep B.A."/>
            <person name="Gill S.R."/>
            <person name="Chang R.F."/>
            <person name="Phan T.H."/>
            <person name="Chen J.H."/>
            <person name="Davidson M.G."/>
            <person name="Lin F."/>
            <person name="Lin J."/>
            <person name="Carleton H.A."/>
            <person name="Mongodin E.F."/>
            <person name="Sensabaugh G.F."/>
            <person name="Perdreau-Remington F."/>
        </authorList>
    </citation>
    <scope>NUCLEOTIDE SEQUENCE [LARGE SCALE GENOMIC DNA]</scope>
    <source>
        <strain>USA300</strain>
    </source>
</reference>
<comment type="function">
    <text evidence="1">One of two assembly initiator proteins, it binds directly to the 5'-end of the 23S rRNA, where it nucleates assembly of the 50S subunit.</text>
</comment>
<comment type="function">
    <text evidence="1">One of the proteins that surrounds the polypeptide exit tunnel on the outside of the subunit.</text>
</comment>
<comment type="subunit">
    <text evidence="1">Part of the 50S ribosomal subunit.</text>
</comment>
<comment type="similarity">
    <text evidence="1">Belongs to the universal ribosomal protein uL24 family.</text>
</comment>